<evidence type="ECO:0000250" key="1">
    <source>
        <dbReference type="UniProtKB" id="P53044"/>
    </source>
</evidence>
<evidence type="ECO:0000256" key="2">
    <source>
        <dbReference type="SAM" id="MobiDB-lite"/>
    </source>
</evidence>
<evidence type="ECO:0000269" key="3">
    <source>
    </source>
</evidence>
<evidence type="ECO:0000269" key="4">
    <source>
    </source>
</evidence>
<evidence type="ECO:0000269" key="5">
    <source>
    </source>
</evidence>
<evidence type="ECO:0000269" key="6">
    <source>
    </source>
</evidence>
<evidence type="ECO:0000269" key="7">
    <source>
    </source>
</evidence>
<evidence type="ECO:0000269" key="8">
    <source>
    </source>
</evidence>
<evidence type="ECO:0000305" key="9"/>
<organism>
    <name type="scientific">Caenorhabditis elegans</name>
    <dbReference type="NCBI Taxonomy" id="6239"/>
    <lineage>
        <taxon>Eukaryota</taxon>
        <taxon>Metazoa</taxon>
        <taxon>Ecdysozoa</taxon>
        <taxon>Nematoda</taxon>
        <taxon>Chromadorea</taxon>
        <taxon>Rhabditida</taxon>
        <taxon>Rhabditina</taxon>
        <taxon>Rhabditomorpha</taxon>
        <taxon>Rhabditoidea</taxon>
        <taxon>Rhabditidae</taxon>
        <taxon>Peloderinae</taxon>
        <taxon>Caenorhabditis</taxon>
    </lineage>
</organism>
<keyword id="KW-0963">Cytoplasm</keyword>
<keyword id="KW-0539">Nucleus</keyword>
<keyword id="KW-1185">Reference proteome</keyword>
<keyword id="KW-0833">Ubl conjugation pathway</keyword>
<gene>
    <name type="primary">ufd-1</name>
    <name type="ORF">F19B6.2</name>
</gene>
<dbReference type="EMBL" id="Z69635">
    <property type="protein sequence ID" value="CAA93460.1"/>
    <property type="molecule type" value="Genomic_DNA"/>
</dbReference>
<dbReference type="PIR" id="T21108">
    <property type="entry name" value="T21108"/>
</dbReference>
<dbReference type="RefSeq" id="NP_502348.1">
    <property type="nucleotide sequence ID" value="NM_069947.5"/>
</dbReference>
<dbReference type="SMR" id="Q19584"/>
<dbReference type="BioGRID" id="533178">
    <property type="interactions" value="7"/>
</dbReference>
<dbReference type="DIP" id="DIP-26847N"/>
<dbReference type="FunCoup" id="Q19584">
    <property type="interactions" value="3401"/>
</dbReference>
<dbReference type="IntAct" id="Q19584">
    <property type="interactions" value="3"/>
</dbReference>
<dbReference type="STRING" id="6239.F19B6.2a.2"/>
<dbReference type="iPTMnet" id="Q19584"/>
<dbReference type="PaxDb" id="6239-F19B6.2a"/>
<dbReference type="PeptideAtlas" id="Q19584"/>
<dbReference type="EnsemblMetazoa" id="F19B6.2a.1">
    <property type="protein sequence ID" value="F19B6.2a.1"/>
    <property type="gene ID" value="WBGene00006733"/>
</dbReference>
<dbReference type="GeneID" id="3565860"/>
<dbReference type="KEGG" id="cel:CELE_F19B6.2"/>
<dbReference type="UCSC" id="F19B6.2b">
    <property type="organism name" value="c. elegans"/>
</dbReference>
<dbReference type="AGR" id="WB:WBGene00006733"/>
<dbReference type="CTD" id="3565860"/>
<dbReference type="WormBase" id="F19B6.2a">
    <property type="protein sequence ID" value="CE05667"/>
    <property type="gene ID" value="WBGene00006733"/>
    <property type="gene designation" value="ufd-1"/>
</dbReference>
<dbReference type="eggNOG" id="KOG1816">
    <property type="taxonomic scope" value="Eukaryota"/>
</dbReference>
<dbReference type="InParanoid" id="Q19584"/>
<dbReference type="OMA" id="WMMQQLC"/>
<dbReference type="OrthoDB" id="422728at2759"/>
<dbReference type="PhylomeDB" id="Q19584"/>
<dbReference type="Reactome" id="R-CEL-110320">
    <property type="pathway name" value="Translesion Synthesis by POLH"/>
</dbReference>
<dbReference type="Reactome" id="R-CEL-8951664">
    <property type="pathway name" value="Neddylation"/>
</dbReference>
<dbReference type="Reactome" id="R-CEL-9755511">
    <property type="pathway name" value="KEAP1-NFE2L2 pathway"/>
</dbReference>
<dbReference type="PRO" id="PR:Q19584"/>
<dbReference type="Proteomes" id="UP000001940">
    <property type="component" value="Chromosome IV"/>
</dbReference>
<dbReference type="Bgee" id="WBGene00006733">
    <property type="expression patterns" value="Expressed in germ line (C elegans) and 4 other cell types or tissues"/>
</dbReference>
<dbReference type="ExpressionAtlas" id="Q19584">
    <property type="expression patterns" value="baseline and differential"/>
</dbReference>
<dbReference type="GO" id="GO:0005634">
    <property type="term" value="C:nucleus"/>
    <property type="evidence" value="ECO:0000314"/>
    <property type="project" value="WormBase"/>
</dbReference>
<dbReference type="GO" id="GO:0034098">
    <property type="term" value="C:VCP-NPL4-UFD1 AAA ATPase complex"/>
    <property type="evidence" value="ECO:0000314"/>
    <property type="project" value="UniProtKB"/>
</dbReference>
<dbReference type="GO" id="GO:0031593">
    <property type="term" value="F:polyubiquitin modification-dependent protein binding"/>
    <property type="evidence" value="ECO:0000318"/>
    <property type="project" value="GO_Central"/>
</dbReference>
<dbReference type="GO" id="GO:0044877">
    <property type="term" value="F:protein-containing complex binding"/>
    <property type="evidence" value="ECO:0000314"/>
    <property type="project" value="UniProtKB"/>
</dbReference>
<dbReference type="GO" id="GO:0009792">
    <property type="term" value="P:embryo development ending in birth or egg hatching"/>
    <property type="evidence" value="ECO:0000315"/>
    <property type="project" value="WormBase"/>
</dbReference>
<dbReference type="GO" id="GO:0036503">
    <property type="term" value="P:ERAD pathway"/>
    <property type="evidence" value="ECO:0000315"/>
    <property type="project" value="WormBase"/>
</dbReference>
<dbReference type="GO" id="GO:1900182">
    <property type="term" value="P:positive regulation of protein localization to nucleus"/>
    <property type="evidence" value="ECO:0000315"/>
    <property type="project" value="UniProtKB"/>
</dbReference>
<dbReference type="GO" id="GO:0006511">
    <property type="term" value="P:ubiquitin-dependent protein catabolic process"/>
    <property type="evidence" value="ECO:0007669"/>
    <property type="project" value="InterPro"/>
</dbReference>
<dbReference type="FunFam" id="2.40.40.50:FF:000001">
    <property type="entry name" value="Ubiquitin fusion degradation protein 1 homolog"/>
    <property type="match status" value="1"/>
</dbReference>
<dbReference type="FunFam" id="3.10.330.10:FF:000002">
    <property type="entry name" value="ubiquitin fusion degradation protein 1 homolog"/>
    <property type="match status" value="1"/>
</dbReference>
<dbReference type="Gene3D" id="3.10.330.10">
    <property type="match status" value="1"/>
</dbReference>
<dbReference type="Gene3D" id="2.40.40.50">
    <property type="entry name" value="Ubiquitin fusion degradation protein UFD1, N-terminal domain"/>
    <property type="match status" value="1"/>
</dbReference>
<dbReference type="InterPro" id="IPR004854">
    <property type="entry name" value="Ufd1-like"/>
</dbReference>
<dbReference type="InterPro" id="IPR042299">
    <property type="entry name" value="Ufd1-like_Nn"/>
</dbReference>
<dbReference type="InterPro" id="IPR055417">
    <property type="entry name" value="UFD1_N1"/>
</dbReference>
<dbReference type="InterPro" id="IPR055418">
    <property type="entry name" value="UFD1_N2"/>
</dbReference>
<dbReference type="PANTHER" id="PTHR12555">
    <property type="entry name" value="UBIQUITIN FUSION DEGRADATON PROTEIN 1"/>
    <property type="match status" value="1"/>
</dbReference>
<dbReference type="PANTHER" id="PTHR12555:SF13">
    <property type="entry name" value="UBIQUITIN RECOGNITION FACTOR IN ER-ASSOCIATED DEGRADATION PROTEIN 1"/>
    <property type="match status" value="1"/>
</dbReference>
<dbReference type="Pfam" id="PF03152">
    <property type="entry name" value="UFD1_N1"/>
    <property type="match status" value="1"/>
</dbReference>
<dbReference type="Pfam" id="PF24842">
    <property type="entry name" value="UFD1_N2"/>
    <property type="match status" value="1"/>
</dbReference>
<reference key="1">
    <citation type="journal article" date="1998" name="Science">
        <title>Genome sequence of the nematode C. elegans: a platform for investigating biology.</title>
        <authorList>
            <consortium name="The C. elegans sequencing consortium"/>
        </authorList>
    </citation>
    <scope>NUCLEOTIDE SEQUENCE [LARGE SCALE GENOMIC DNA]</scope>
    <source>
        <strain>Bristol N2</strain>
    </source>
</reference>
<reference key="2">
    <citation type="journal article" date="2006" name="J. Struct. Biol.">
        <title>A conserved role of Caenorhabditis elegans CDC-48 in ER-associated protein degradation.</title>
        <authorList>
            <person name="Mouysset J."/>
            <person name="Kaehler C."/>
            <person name="Hoppe T."/>
        </authorList>
    </citation>
    <scope>FUNCTION</scope>
    <scope>INTERACTION WITH CDC-48.1; CDC-48.2 AND NPL-4</scope>
    <scope>DISRUPTION PHENOTYPE</scope>
</reference>
<reference key="3">
    <citation type="journal article" date="2008" name="Proc. Natl. Acad. Sci. U.S.A.">
        <title>Cell cycle progression requires the CDC-48UFD-1/NPL-4 complex for efficient DNA replication.</title>
        <authorList>
            <person name="Mouysset J."/>
            <person name="Deichsel A."/>
            <person name="Moser S."/>
            <person name="Hoege C."/>
            <person name="Hyman A.A."/>
            <person name="Gartner A."/>
            <person name="Hoppe T."/>
        </authorList>
    </citation>
    <scope>FUNCTION</scope>
    <scope>SUBCELLULAR LOCATION</scope>
    <scope>DISRUPTION PHENOTYPE</scope>
</reference>
<reference key="4">
    <citation type="journal article" date="2010" name="Genes Cells">
        <title>Caenorhabditis elegans UBX cofactors for CDC-48/p97 control spermatogenesis.</title>
        <authorList>
            <person name="Sasagawa Y."/>
            <person name="Yamanaka K."/>
            <person name="Saito-Sasagawa Y."/>
            <person name="Ogura T."/>
        </authorList>
    </citation>
    <scope>IDENTIFICATION IN A COMPLEX WITH UBXN-3; UFD-1 AND NPL-4.1</scope>
    <scope>INTERACTION WITH CDC-48.1</scope>
    <scope>DISRUPTION PHENOTYPE</scope>
</reference>
<reference key="5">
    <citation type="journal article" date="2011" name="Mol. Cell">
        <title>CDC-48/p97 coordinates CDT-1 degradation with GINS chromatin dissociation to ensure faithful DNA replication.</title>
        <authorList>
            <person name="Franz A."/>
            <person name="Orth M."/>
            <person name="Pirson P.A."/>
            <person name="Sonneville R."/>
            <person name="Blow J.J."/>
            <person name="Gartner A."/>
            <person name="Stemmann O."/>
            <person name="Hoppe T."/>
        </authorList>
    </citation>
    <scope>FUNCTION</scope>
    <scope>DISRUPTION PHENOTYPE</scope>
</reference>
<reference key="6">
    <citation type="journal article" date="2012" name="PLoS ONE">
        <title>A pro-cathepsin L mutant is a luminal substrate for endoplasmic-reticulum-associated degradation in C. elegans.</title>
        <authorList>
            <person name="Miedel M.T."/>
            <person name="Graf N.J."/>
            <person name="Stephen K.E."/>
            <person name="Long O.S."/>
            <person name="Pak S.C."/>
            <person name="Perlmutter D.H."/>
            <person name="Silverman G.A."/>
            <person name="Luke C.J."/>
        </authorList>
    </citation>
    <scope>FUNCTION</scope>
    <scope>DISRUPTION PHENOTYPE</scope>
</reference>
<reference key="7">
    <citation type="journal article" date="2016" name="Nat. Commun.">
        <title>Chromatin-associated degradation is defined by UBXN-3/FAF1 to safeguard DNA replication fork progression.</title>
        <authorList>
            <person name="Franz A."/>
            <person name="Pirson P.A."/>
            <person name="Pilger D."/>
            <person name="Halder S."/>
            <person name="Achuthankutty D."/>
            <person name="Kashkar H."/>
            <person name="Ramadan K."/>
            <person name="Hoppe T."/>
        </authorList>
    </citation>
    <scope>FUNCTION</scope>
    <scope>DISRUPTION PHENOTYPE</scope>
</reference>
<feature type="chain" id="PRO_0000194986" description="Ubiquitin fusion degradation protein 1 homolog">
    <location>
        <begin position="1"/>
        <end position="342"/>
    </location>
</feature>
<feature type="region of interest" description="Disordered" evidence="2">
    <location>
        <begin position="245"/>
        <end position="276"/>
    </location>
</feature>
<feature type="region of interest" description="Disordered" evidence="2">
    <location>
        <begin position="318"/>
        <end position="342"/>
    </location>
</feature>
<feature type="compositionally biased region" description="Polar residues" evidence="2">
    <location>
        <begin position="259"/>
        <end position="275"/>
    </location>
</feature>
<proteinExistence type="evidence at protein level"/>
<comment type="function">
    <text evidence="1 3 4 6 7 8">Functions at a post-ubiquitination step in the ubiquitin fusion degradation (UFD) pathway (By similarity). In association with npl-4.1 and/or npl-4.2 and ATPase cdc-48.1 and/or cdc-48.2, involved in the cytoplasmic elimination of misfolded proteins exported from the ER (PubMed:16647269, PubMed:22768338). This pathway, known as ERAD, prevents the activation of the unfolded protein response (UPR) caused by the accumulation of misfolded proteins in the ER (PubMed:16647269, PubMed:22768338). During S phase and in association with npl-4.1 and/or npl-4.2, cdc-48.1 and/or cdc-48.2 and ubxn-3, ensures the degradation of DNA licensing factor cdt-1 after the initiation of DNA replication and thus the disassembly of the DNA replication CMG helicase complex by promoting the dissociation from chromatin of several of its components including cdc-45 and sld-5 (PubMed:18728180, PubMed:21981920, PubMed:26842564). Regulates ubxn-3 nuclear localization during S phase (PubMed:26842564).</text>
</comment>
<comment type="subunit">
    <text evidence="3 5">Forms a complex composed of ubxn-3, ufd-1, npl-4.1 and cdc-48.1; within the complex interacts with cdc-48.1 (PubMed:16647269, PubMed:20977550). Interacts with cdc-48.2 (PubMed:16647269). Interacts with npl-4.1 and/or npl-4.2 (PubMed:16647269).</text>
</comment>
<comment type="interaction">
    <interactant intactId="EBI-319945">
        <id>Q19584</id>
    </interactant>
    <interactant intactId="EBI-319957">
        <id>Q95QZ9</id>
        <label>npl-4.2</label>
    </interactant>
    <organismsDiffer>false</organismsDiffer>
    <experiments>3</experiments>
</comment>
<comment type="subcellular location">
    <subcellularLocation>
        <location evidence="4">Cytoplasm</location>
    </subcellularLocation>
    <subcellularLocation>
        <location evidence="4">Nucleus</location>
    </subcellularLocation>
    <text evidence="4">Localizes to the cytoplasm during mitosis. Nuclear localization upon nuclear membrane re-assembly is cdc-48-dependent.</text>
</comment>
<comment type="disruption phenotype">
    <text evidence="3 4 5 6 7 8">RNAi-mediated knockdown causes embryonic lethality (PubMed:16647269, PubMed:18728180). In embryos, DNA replication is partially impaired causing a delay in S phase progression in P0, AB and P1 cells; simultaneous RNAi-mediated knockdown of DNA replication checkpoint kinases chk-1 or atl-1 suppresses the delay in S phase (PubMed:18728180). Prevents DNA replication licensing factor cdt-1 down-regulation and causes cdt-1 accumulation on mitotic chromosomes (PubMed:21981920). Impairs dissociation from the chromatin of components of the DNA replication machinery, including cdc-45 and GINS complex component sld-5, resulting in their persistent association with chromatin throughout embryonic mitosis (PubMed:18728180, PubMed:21981920, PubMed:26842564). Abnormal ubxn-3 localization into punctate structures in the nucleus (PubMed:26842564). Reduces npl-4 expression in embryos (PubMed:21981920, PubMed:26842564). RNAi-mediated knockdown in adults causes defects in germline development, induces the unfolded protein response, and causes the accumulation of misfolded protein cpl-1 in the ER (PubMed:16647269, PubMed:20977550, PubMed:22768338).</text>
</comment>
<comment type="similarity">
    <text evidence="9">Belongs to the UFD1 family.</text>
</comment>
<sequence length="342" mass="36904">MQAWIQQGLHGMQMGGRVGNYDQTFVVYGPVFLPNATQSKISEINYGGKILLPSSALNLLMQYNIPMPMLFKLTNMAVQRVTHCGVLEFSAPEGQAILPLWMMQQLGLDDGDTIRIESATLPKATFAKLKPMSLEFLNITNPKAVLEVELRKYACLTKNDRIPTSYAGQTLEFLVVDLKPANSVCIIECDVNLDFDPPEGYVEQPRQVTPAVTAKPPAPDASAFIGAGQKAGGSGGTGQNATSVFGGAGRRLDGKKKPSSSVSLSDGTGVSTSNAAPVANDLPAIPPVVVNEDYKPGRVSFLRYDYKRVDVLEKELREKEASKAGQPSNVFRGGNRTLRGAR</sequence>
<accession>Q19584</accession>
<protein>
    <recommendedName>
        <fullName>Ubiquitin fusion degradation protein 1 homolog</fullName>
        <shortName>UB fusion protein 1</shortName>
    </recommendedName>
</protein>
<name>UFD1_CAEEL</name>